<proteinExistence type="inferred from homology"/>
<keyword id="KW-0249">Electron transport</keyword>
<keyword id="KW-0349">Heme</keyword>
<keyword id="KW-0408">Iron</keyword>
<keyword id="KW-0472">Membrane</keyword>
<keyword id="KW-0479">Metal-binding</keyword>
<keyword id="KW-0496">Mitochondrion</keyword>
<keyword id="KW-0999">Mitochondrion inner membrane</keyword>
<keyword id="KW-0679">Respiratory chain</keyword>
<keyword id="KW-0812">Transmembrane</keyword>
<keyword id="KW-1133">Transmembrane helix</keyword>
<keyword id="KW-0813">Transport</keyword>
<keyword id="KW-0830">Ubiquinone</keyword>
<comment type="function">
    <text evidence="2">Component of the ubiquinol-cytochrome c reductase complex (complex III or cytochrome b-c1 complex) that is part of the mitochondrial respiratory chain. The b-c1 complex mediates electron transfer from ubiquinol to cytochrome c. Contributes to the generation of a proton gradient across the mitochondrial membrane that is then used for ATP synthesis.</text>
</comment>
<comment type="cofactor">
    <cofactor evidence="2">
        <name>heme b</name>
        <dbReference type="ChEBI" id="CHEBI:60344"/>
    </cofactor>
    <text evidence="2">Binds 2 heme b groups non-covalently.</text>
</comment>
<comment type="subunit">
    <text evidence="2">The cytochrome bc1 complex contains 11 subunits: 3 respiratory subunits (MT-CYB, CYC1 and UQCRFS1), 2 core proteins (UQCRC1 and UQCRC2) and 6 low-molecular weight proteins (UQCRH/QCR6, UQCRB/QCR7, UQCRQ/QCR8, UQCR10/QCR9, UQCR11/QCR10 and a cleavage product of UQCRFS1). This cytochrome bc1 complex then forms a dimer.</text>
</comment>
<comment type="subcellular location">
    <subcellularLocation>
        <location evidence="2">Mitochondrion inner membrane</location>
        <topology evidence="2">Multi-pass membrane protein</topology>
    </subcellularLocation>
</comment>
<comment type="miscellaneous">
    <text evidence="1">Heme 1 (or BL or b562) is low-potential and absorbs at about 562 nm, and heme 2 (or BH or b566) is high-potential and absorbs at about 566 nm.</text>
</comment>
<comment type="similarity">
    <text evidence="3 4">Belongs to the cytochrome b family.</text>
</comment>
<comment type="caution">
    <text evidence="2">The full-length protein contains only eight transmembrane helices, not nine as predicted by bioinformatics tools.</text>
</comment>
<reference key="1">
    <citation type="submission" date="1996-10" db="EMBL/GenBank/DDBJ databases">
        <authorList>
            <person name="Nunn G.B."/>
            <person name="Zino F."/>
        </authorList>
    </citation>
    <scope>NUCLEOTIDE SEQUENCE [GENOMIC DNA]</scope>
    <source>
        <strain>Isolate Puften</strain>
    </source>
</reference>
<reference key="2">
    <citation type="journal article" date="1996" name="Mol. Phylogenet. Evol.">
        <title>Molecular phylogenetics of Puffinus shearwaters: preliminary evidence from mitochondrial cytochrome b gene sequences.</title>
        <authorList>
            <person name="Austin J.J."/>
        </authorList>
    </citation>
    <scope>NUCLEOTIDE SEQUENCE [GENOMIC DNA] OF 34-135</scope>
    <source>
        <strain>Various strains</strain>
    </source>
</reference>
<accession>Q35653</accession>
<accession>Q35651</accession>
<accession>Q35652</accession>
<feature type="chain" id="PRO_0000061472" description="Cytochrome b">
    <location>
        <begin position="1"/>
        <end position="380"/>
    </location>
</feature>
<feature type="transmembrane region" description="Helical" evidence="2">
    <location>
        <begin position="34"/>
        <end position="54"/>
    </location>
</feature>
<feature type="transmembrane region" description="Helical" evidence="2">
    <location>
        <begin position="78"/>
        <end position="99"/>
    </location>
</feature>
<feature type="transmembrane region" description="Helical" evidence="2">
    <location>
        <begin position="114"/>
        <end position="134"/>
    </location>
</feature>
<feature type="transmembrane region" description="Helical" evidence="2">
    <location>
        <begin position="179"/>
        <end position="199"/>
    </location>
</feature>
<feature type="transmembrane region" description="Helical" evidence="2">
    <location>
        <begin position="227"/>
        <end position="247"/>
    </location>
</feature>
<feature type="transmembrane region" description="Helical" evidence="2">
    <location>
        <begin position="289"/>
        <end position="309"/>
    </location>
</feature>
<feature type="transmembrane region" description="Helical" evidence="2">
    <location>
        <begin position="321"/>
        <end position="341"/>
    </location>
</feature>
<feature type="transmembrane region" description="Helical" evidence="2">
    <location>
        <begin position="348"/>
        <end position="368"/>
    </location>
</feature>
<feature type="binding site" description="axial binding residue" evidence="2">
    <location>
        <position position="84"/>
    </location>
    <ligand>
        <name>heme b</name>
        <dbReference type="ChEBI" id="CHEBI:60344"/>
        <label>b562</label>
    </ligand>
    <ligandPart>
        <name>Fe</name>
        <dbReference type="ChEBI" id="CHEBI:18248"/>
    </ligandPart>
</feature>
<feature type="binding site" description="axial binding residue" evidence="2">
    <location>
        <position position="98"/>
    </location>
    <ligand>
        <name>heme b</name>
        <dbReference type="ChEBI" id="CHEBI:60344"/>
        <label>b566</label>
    </ligand>
    <ligandPart>
        <name>Fe</name>
        <dbReference type="ChEBI" id="CHEBI:18248"/>
    </ligandPart>
</feature>
<feature type="binding site" description="axial binding residue" evidence="2">
    <location>
        <position position="183"/>
    </location>
    <ligand>
        <name>heme b</name>
        <dbReference type="ChEBI" id="CHEBI:60344"/>
        <label>b562</label>
    </ligand>
    <ligandPart>
        <name>Fe</name>
        <dbReference type="ChEBI" id="CHEBI:18248"/>
    </ligandPart>
</feature>
<feature type="binding site" description="axial binding residue" evidence="2">
    <location>
        <position position="197"/>
    </location>
    <ligand>
        <name>heme b</name>
        <dbReference type="ChEBI" id="CHEBI:60344"/>
        <label>b566</label>
    </ligand>
    <ligandPart>
        <name>Fe</name>
        <dbReference type="ChEBI" id="CHEBI:18248"/>
    </ligandPart>
</feature>
<feature type="binding site" evidence="2">
    <location>
        <position position="202"/>
    </location>
    <ligand>
        <name>a ubiquinone</name>
        <dbReference type="ChEBI" id="CHEBI:16389"/>
    </ligand>
</feature>
<sequence>MAPNIRKSHPLLKMVNNSLIDLPAPSNISAWWNFGSLLGICLLTQILTGLLLAMHYTADTTLAFSSVAHTCRNVQYGWLIRNLHANGASFFFICIYLHIGRGFYYGSYLYKETWNTGVILLLTLMATAFVGYVLPWGQMSFWGATVITNLFSAIPYIGQTLVEWAWGGFSVDNPTLTRFFALHFLLPFMIAGLTLIHLTFLHESGSNNSLGIVSNCDKIPFHPYFTLKDILGFMLMLLPLTTLALFSPNLLGDPENFTPANPLVTPPHIKPEWYFLFAYAILRSIPNKLGGVLALAASVLVLFLAPFLHKAKQRAMTFRPLSQLLFWILVANLFILTWVGSQPVEHPFIIIGQLASITYFTILLILFPITGALENKMLNY</sequence>
<geneLocation type="mitochondrion"/>
<evidence type="ECO:0000250" key="1"/>
<evidence type="ECO:0000250" key="2">
    <source>
        <dbReference type="UniProtKB" id="P00157"/>
    </source>
</evidence>
<evidence type="ECO:0000255" key="3">
    <source>
        <dbReference type="PROSITE-ProRule" id="PRU00967"/>
    </source>
</evidence>
<evidence type="ECO:0000255" key="4">
    <source>
        <dbReference type="PROSITE-ProRule" id="PRU00968"/>
    </source>
</evidence>
<gene>
    <name type="primary">MT-CYB</name>
    <name type="synonym">COB</name>
    <name type="synonym">CYTB</name>
    <name type="synonym">MTCYB</name>
</gene>
<protein>
    <recommendedName>
        <fullName>Cytochrome b</fullName>
    </recommendedName>
    <alternativeName>
        <fullName>Complex III subunit 3</fullName>
    </alternativeName>
    <alternativeName>
        <fullName>Complex III subunit III</fullName>
    </alternativeName>
    <alternativeName>
        <fullName>Cytochrome b-c1 complex subunit 3</fullName>
    </alternativeName>
    <alternativeName>
        <fullName>Ubiquinol-cytochrome-c reductase complex cytochrome b subunit</fullName>
    </alternativeName>
</protein>
<name>CYB_ARDTE</name>
<dbReference type="EMBL" id="U74352">
    <property type="protein sequence ID" value="AAD02888.1"/>
    <property type="molecule type" value="Genomic_DNA"/>
</dbReference>
<dbReference type="EMBL" id="L43044">
    <property type="protein sequence ID" value="AAB39792.1"/>
    <property type="molecule type" value="Genomic_DNA"/>
</dbReference>
<dbReference type="EMBL" id="L43045">
    <property type="protein sequence ID" value="AAB39793.1"/>
    <property type="molecule type" value="Genomic_DNA"/>
</dbReference>
<dbReference type="EMBL" id="L43046">
    <property type="protein sequence ID" value="AAB39794.1"/>
    <property type="molecule type" value="Genomic_DNA"/>
</dbReference>
<dbReference type="SMR" id="Q35653"/>
<dbReference type="GO" id="GO:0005743">
    <property type="term" value="C:mitochondrial inner membrane"/>
    <property type="evidence" value="ECO:0007669"/>
    <property type="project" value="UniProtKB-SubCell"/>
</dbReference>
<dbReference type="GO" id="GO:0045275">
    <property type="term" value="C:respiratory chain complex III"/>
    <property type="evidence" value="ECO:0007669"/>
    <property type="project" value="InterPro"/>
</dbReference>
<dbReference type="GO" id="GO:0046872">
    <property type="term" value="F:metal ion binding"/>
    <property type="evidence" value="ECO:0007669"/>
    <property type="project" value="UniProtKB-KW"/>
</dbReference>
<dbReference type="GO" id="GO:0008121">
    <property type="term" value="F:ubiquinol-cytochrome-c reductase activity"/>
    <property type="evidence" value="ECO:0007669"/>
    <property type="project" value="InterPro"/>
</dbReference>
<dbReference type="GO" id="GO:0006122">
    <property type="term" value="P:mitochondrial electron transport, ubiquinol to cytochrome c"/>
    <property type="evidence" value="ECO:0007669"/>
    <property type="project" value="TreeGrafter"/>
</dbReference>
<dbReference type="CDD" id="cd00290">
    <property type="entry name" value="cytochrome_b_C"/>
    <property type="match status" value="1"/>
</dbReference>
<dbReference type="CDD" id="cd00284">
    <property type="entry name" value="Cytochrome_b_N"/>
    <property type="match status" value="1"/>
</dbReference>
<dbReference type="FunFam" id="1.20.810.10:FF:000002">
    <property type="entry name" value="Cytochrome b"/>
    <property type="match status" value="1"/>
</dbReference>
<dbReference type="Gene3D" id="1.20.810.10">
    <property type="entry name" value="Cytochrome Bc1 Complex, Chain C"/>
    <property type="match status" value="1"/>
</dbReference>
<dbReference type="InterPro" id="IPR005798">
    <property type="entry name" value="Cyt_b/b6_C"/>
</dbReference>
<dbReference type="InterPro" id="IPR036150">
    <property type="entry name" value="Cyt_b/b6_C_sf"/>
</dbReference>
<dbReference type="InterPro" id="IPR005797">
    <property type="entry name" value="Cyt_b/b6_N"/>
</dbReference>
<dbReference type="InterPro" id="IPR027387">
    <property type="entry name" value="Cytb/b6-like_sf"/>
</dbReference>
<dbReference type="InterPro" id="IPR030689">
    <property type="entry name" value="Cytochrome_b"/>
</dbReference>
<dbReference type="InterPro" id="IPR048260">
    <property type="entry name" value="Cytochrome_b_C_euk/bac"/>
</dbReference>
<dbReference type="InterPro" id="IPR048259">
    <property type="entry name" value="Cytochrome_b_N_euk/bac"/>
</dbReference>
<dbReference type="InterPro" id="IPR016174">
    <property type="entry name" value="Di-haem_cyt_TM"/>
</dbReference>
<dbReference type="PANTHER" id="PTHR19271">
    <property type="entry name" value="CYTOCHROME B"/>
    <property type="match status" value="1"/>
</dbReference>
<dbReference type="PANTHER" id="PTHR19271:SF16">
    <property type="entry name" value="CYTOCHROME B"/>
    <property type="match status" value="1"/>
</dbReference>
<dbReference type="Pfam" id="PF00032">
    <property type="entry name" value="Cytochrom_B_C"/>
    <property type="match status" value="1"/>
</dbReference>
<dbReference type="Pfam" id="PF00033">
    <property type="entry name" value="Cytochrome_B"/>
    <property type="match status" value="1"/>
</dbReference>
<dbReference type="PIRSF" id="PIRSF038885">
    <property type="entry name" value="COB"/>
    <property type="match status" value="1"/>
</dbReference>
<dbReference type="SUPFAM" id="SSF81648">
    <property type="entry name" value="a domain/subunit of cytochrome bc1 complex (Ubiquinol-cytochrome c reductase)"/>
    <property type="match status" value="1"/>
</dbReference>
<dbReference type="SUPFAM" id="SSF81342">
    <property type="entry name" value="Transmembrane di-heme cytochromes"/>
    <property type="match status" value="1"/>
</dbReference>
<dbReference type="PROSITE" id="PS51003">
    <property type="entry name" value="CYTB_CTER"/>
    <property type="match status" value="1"/>
</dbReference>
<dbReference type="PROSITE" id="PS51002">
    <property type="entry name" value="CYTB_NTER"/>
    <property type="match status" value="1"/>
</dbReference>
<organism>
    <name type="scientific">Ardenna tenuirostris</name>
    <name type="common">Short-tailed shearwater</name>
    <name type="synonym">Puffinus tenuirostris</name>
    <dbReference type="NCBI Taxonomy" id="48684"/>
    <lineage>
        <taxon>Eukaryota</taxon>
        <taxon>Metazoa</taxon>
        <taxon>Chordata</taxon>
        <taxon>Craniata</taxon>
        <taxon>Vertebrata</taxon>
        <taxon>Euteleostomi</taxon>
        <taxon>Archelosauria</taxon>
        <taxon>Archosauria</taxon>
        <taxon>Dinosauria</taxon>
        <taxon>Saurischia</taxon>
        <taxon>Theropoda</taxon>
        <taxon>Coelurosauria</taxon>
        <taxon>Aves</taxon>
        <taxon>Neognathae</taxon>
        <taxon>Neoaves</taxon>
        <taxon>Aequornithes</taxon>
        <taxon>Procellariiformes</taxon>
        <taxon>Procellariidae</taxon>
        <taxon>Ardenna</taxon>
    </lineage>
</organism>